<feature type="chain" id="PRO_1000137545" description="Protein GrpE">
    <location>
        <begin position="1"/>
        <end position="182"/>
    </location>
</feature>
<feature type="region of interest" description="Disordered" evidence="2">
    <location>
        <begin position="1"/>
        <end position="33"/>
    </location>
</feature>
<feature type="compositionally biased region" description="Basic and acidic residues" evidence="2">
    <location>
        <begin position="1"/>
        <end position="17"/>
    </location>
</feature>
<proteinExistence type="inferred from homology"/>
<comment type="function">
    <text evidence="1">Participates actively in the response to hyperosmotic and heat shock by preventing the aggregation of stress-denatured proteins, in association with DnaK and GrpE. It is the nucleotide exchange factor for DnaK and may function as a thermosensor. Unfolded proteins bind initially to DnaJ; upon interaction with the DnaJ-bound protein, DnaK hydrolyzes its bound ATP, resulting in the formation of a stable complex. GrpE releases ADP from DnaK; ATP binding to DnaK triggers the release of the substrate protein, thus completing the reaction cycle. Several rounds of ATP-dependent interactions between DnaJ, DnaK and GrpE are required for fully efficient folding.</text>
</comment>
<comment type="subunit">
    <text evidence="1">Homodimer.</text>
</comment>
<comment type="subcellular location">
    <subcellularLocation>
        <location evidence="1">Cytoplasm</location>
    </subcellularLocation>
</comment>
<comment type="similarity">
    <text evidence="1">Belongs to the GrpE family.</text>
</comment>
<gene>
    <name evidence="1" type="primary">grpE</name>
    <name type="ordered locus">BH0519</name>
</gene>
<accession>B2S0M1</accession>
<dbReference type="EMBL" id="CP000048">
    <property type="protein sequence ID" value="AAX17027.1"/>
    <property type="molecule type" value="Genomic_DNA"/>
</dbReference>
<dbReference type="RefSeq" id="WP_012422279.1">
    <property type="nucleotide sequence ID" value="NZ_CP073136.1"/>
</dbReference>
<dbReference type="SMR" id="B2S0M1"/>
<dbReference type="KEGG" id="bhr:BH0519"/>
<dbReference type="HOGENOM" id="CLU_057217_5_2_12"/>
<dbReference type="Proteomes" id="UP000008834">
    <property type="component" value="Chromosome"/>
</dbReference>
<dbReference type="GO" id="GO:0005737">
    <property type="term" value="C:cytoplasm"/>
    <property type="evidence" value="ECO:0007669"/>
    <property type="project" value="UniProtKB-SubCell"/>
</dbReference>
<dbReference type="GO" id="GO:0000774">
    <property type="term" value="F:adenyl-nucleotide exchange factor activity"/>
    <property type="evidence" value="ECO:0007669"/>
    <property type="project" value="InterPro"/>
</dbReference>
<dbReference type="GO" id="GO:0042803">
    <property type="term" value="F:protein homodimerization activity"/>
    <property type="evidence" value="ECO:0007669"/>
    <property type="project" value="InterPro"/>
</dbReference>
<dbReference type="GO" id="GO:0051087">
    <property type="term" value="F:protein-folding chaperone binding"/>
    <property type="evidence" value="ECO:0007669"/>
    <property type="project" value="InterPro"/>
</dbReference>
<dbReference type="GO" id="GO:0051082">
    <property type="term" value="F:unfolded protein binding"/>
    <property type="evidence" value="ECO:0007669"/>
    <property type="project" value="TreeGrafter"/>
</dbReference>
<dbReference type="GO" id="GO:0006457">
    <property type="term" value="P:protein folding"/>
    <property type="evidence" value="ECO:0007669"/>
    <property type="project" value="InterPro"/>
</dbReference>
<dbReference type="CDD" id="cd00446">
    <property type="entry name" value="GrpE"/>
    <property type="match status" value="1"/>
</dbReference>
<dbReference type="FunFam" id="2.30.22.10:FF:000001">
    <property type="entry name" value="Protein GrpE"/>
    <property type="match status" value="1"/>
</dbReference>
<dbReference type="Gene3D" id="3.90.20.20">
    <property type="match status" value="1"/>
</dbReference>
<dbReference type="Gene3D" id="2.30.22.10">
    <property type="entry name" value="Head domain of nucleotide exchange factor GrpE"/>
    <property type="match status" value="1"/>
</dbReference>
<dbReference type="HAMAP" id="MF_01151">
    <property type="entry name" value="GrpE"/>
    <property type="match status" value="1"/>
</dbReference>
<dbReference type="InterPro" id="IPR000740">
    <property type="entry name" value="GrpE"/>
</dbReference>
<dbReference type="InterPro" id="IPR013805">
    <property type="entry name" value="GrpE_coiled_coil"/>
</dbReference>
<dbReference type="InterPro" id="IPR009012">
    <property type="entry name" value="GrpE_head"/>
</dbReference>
<dbReference type="NCBIfam" id="NF010738">
    <property type="entry name" value="PRK14140.1"/>
    <property type="match status" value="1"/>
</dbReference>
<dbReference type="PANTHER" id="PTHR21237">
    <property type="entry name" value="GRPE PROTEIN"/>
    <property type="match status" value="1"/>
</dbReference>
<dbReference type="PANTHER" id="PTHR21237:SF23">
    <property type="entry name" value="GRPE PROTEIN HOMOLOG, MITOCHONDRIAL"/>
    <property type="match status" value="1"/>
</dbReference>
<dbReference type="Pfam" id="PF01025">
    <property type="entry name" value="GrpE"/>
    <property type="match status" value="1"/>
</dbReference>
<dbReference type="PRINTS" id="PR00773">
    <property type="entry name" value="GRPEPROTEIN"/>
</dbReference>
<dbReference type="SUPFAM" id="SSF58014">
    <property type="entry name" value="Coiled-coil domain of nucleotide exchange factor GrpE"/>
    <property type="match status" value="1"/>
</dbReference>
<dbReference type="SUPFAM" id="SSF51064">
    <property type="entry name" value="Head domain of nucleotide exchange factor GrpE"/>
    <property type="match status" value="1"/>
</dbReference>
<dbReference type="PROSITE" id="PS01071">
    <property type="entry name" value="GRPE"/>
    <property type="match status" value="1"/>
</dbReference>
<sequence>MEEKKRCEESEKIKEQENETLPNEDSPSMGKKVAELENEISNLKDLYLRKQAEFENFRKRLEKDKENFIKFANENIMKDIINFLDNLERAIDSSKQSKDFDTLLSGISMIESEVLSSFDKKYNLKKFGKPGEDFDPSQHEAISIEEKEGVKTPEIVEVYQKGYCYNNRVLRTAKVKVAQSKN</sequence>
<keyword id="KW-0143">Chaperone</keyword>
<keyword id="KW-0963">Cytoplasm</keyword>
<keyword id="KW-0346">Stress response</keyword>
<protein>
    <recommendedName>
        <fullName evidence="1">Protein GrpE</fullName>
    </recommendedName>
    <alternativeName>
        <fullName evidence="1">HSP-70 cofactor</fullName>
    </alternativeName>
</protein>
<evidence type="ECO:0000255" key="1">
    <source>
        <dbReference type="HAMAP-Rule" id="MF_01151"/>
    </source>
</evidence>
<evidence type="ECO:0000256" key="2">
    <source>
        <dbReference type="SAM" id="MobiDB-lite"/>
    </source>
</evidence>
<reference key="1">
    <citation type="submission" date="2004-12" db="EMBL/GenBank/DDBJ databases">
        <title>The genome sequence of Borrelia hermsii and Borrelia turicatae: comparative analysis of two agents of endemic N. America relapsing fever.</title>
        <authorList>
            <person name="Porcella S.F."/>
            <person name="Raffel S.J."/>
            <person name="Schrumpf M.E."/>
            <person name="Montgomery B."/>
            <person name="Smith T."/>
            <person name="Schwan T.G."/>
        </authorList>
    </citation>
    <scope>NUCLEOTIDE SEQUENCE [LARGE SCALE GENOMIC DNA]</scope>
    <source>
        <strain>HS1 / DAH</strain>
    </source>
</reference>
<organism>
    <name type="scientific">Borrelia hermsii (strain HS1 / DAH)</name>
    <dbReference type="NCBI Taxonomy" id="314723"/>
    <lineage>
        <taxon>Bacteria</taxon>
        <taxon>Pseudomonadati</taxon>
        <taxon>Spirochaetota</taxon>
        <taxon>Spirochaetia</taxon>
        <taxon>Spirochaetales</taxon>
        <taxon>Borreliaceae</taxon>
        <taxon>Borrelia</taxon>
    </lineage>
</organism>
<name>GRPE_BORHD</name>